<feature type="chain" id="PRO_1000119047" description="Shikimate kinase">
    <location>
        <begin position="1"/>
        <end position="200"/>
    </location>
</feature>
<feature type="binding site" evidence="1">
    <location>
        <begin position="33"/>
        <end position="38"/>
    </location>
    <ligand>
        <name>ATP</name>
        <dbReference type="ChEBI" id="CHEBI:30616"/>
    </ligand>
</feature>
<feature type="binding site" evidence="1">
    <location>
        <position position="37"/>
    </location>
    <ligand>
        <name>Mg(2+)</name>
        <dbReference type="ChEBI" id="CHEBI:18420"/>
    </ligand>
</feature>
<feature type="binding site" evidence="1">
    <location>
        <position position="55"/>
    </location>
    <ligand>
        <name>substrate</name>
    </ligand>
</feature>
<feature type="binding site" evidence="1">
    <location>
        <position position="79"/>
    </location>
    <ligand>
        <name>substrate</name>
    </ligand>
</feature>
<feature type="binding site" evidence="1">
    <location>
        <position position="101"/>
    </location>
    <ligand>
        <name>substrate</name>
    </ligand>
</feature>
<feature type="binding site" evidence="1">
    <location>
        <position position="139"/>
    </location>
    <ligand>
        <name>ATP</name>
        <dbReference type="ChEBI" id="CHEBI:30616"/>
    </ligand>
</feature>
<feature type="binding site" evidence="1">
    <location>
        <position position="158"/>
    </location>
    <ligand>
        <name>substrate</name>
    </ligand>
</feature>
<reference key="1">
    <citation type="journal article" date="2008" name="PLoS ONE">
        <title>Genome sequence of Brucella abortus vaccine strain S19 compared to virulent strains yields candidate virulence genes.</title>
        <authorList>
            <person name="Crasta O.R."/>
            <person name="Folkerts O."/>
            <person name="Fei Z."/>
            <person name="Mane S.P."/>
            <person name="Evans C."/>
            <person name="Martino-Catt S."/>
            <person name="Bricker B."/>
            <person name="Yu G."/>
            <person name="Du L."/>
            <person name="Sobral B.W."/>
        </authorList>
    </citation>
    <scope>NUCLEOTIDE SEQUENCE [LARGE SCALE GENOMIC DNA]</scope>
    <source>
        <strain>S19</strain>
    </source>
</reference>
<evidence type="ECO:0000255" key="1">
    <source>
        <dbReference type="HAMAP-Rule" id="MF_00109"/>
    </source>
</evidence>
<keyword id="KW-0028">Amino-acid biosynthesis</keyword>
<keyword id="KW-0057">Aromatic amino acid biosynthesis</keyword>
<keyword id="KW-0067">ATP-binding</keyword>
<keyword id="KW-0963">Cytoplasm</keyword>
<keyword id="KW-0418">Kinase</keyword>
<keyword id="KW-0460">Magnesium</keyword>
<keyword id="KW-0479">Metal-binding</keyword>
<keyword id="KW-0547">Nucleotide-binding</keyword>
<keyword id="KW-0808">Transferase</keyword>
<accession>B2S8S9</accession>
<organism>
    <name type="scientific">Brucella abortus (strain S19)</name>
    <dbReference type="NCBI Taxonomy" id="430066"/>
    <lineage>
        <taxon>Bacteria</taxon>
        <taxon>Pseudomonadati</taxon>
        <taxon>Pseudomonadota</taxon>
        <taxon>Alphaproteobacteria</taxon>
        <taxon>Hyphomicrobiales</taxon>
        <taxon>Brucellaceae</taxon>
        <taxon>Brucella/Ochrobactrum group</taxon>
        <taxon>Brucella</taxon>
    </lineage>
</organism>
<dbReference type="EC" id="2.7.1.71" evidence="1"/>
<dbReference type="EMBL" id="CP000887">
    <property type="protein sequence ID" value="ACD73383.1"/>
    <property type="molecule type" value="Genomic_DNA"/>
</dbReference>
<dbReference type="RefSeq" id="WP_002971869.1">
    <property type="nucleotide sequence ID" value="NC_010742.1"/>
</dbReference>
<dbReference type="SMR" id="B2S8S9"/>
<dbReference type="KEGG" id="bmc:BAbS19_I19010"/>
<dbReference type="HOGENOM" id="CLU_057607_2_0_5"/>
<dbReference type="UniPathway" id="UPA00053">
    <property type="reaction ID" value="UER00088"/>
</dbReference>
<dbReference type="Proteomes" id="UP000002565">
    <property type="component" value="Chromosome 1"/>
</dbReference>
<dbReference type="GO" id="GO:0005829">
    <property type="term" value="C:cytosol"/>
    <property type="evidence" value="ECO:0007669"/>
    <property type="project" value="TreeGrafter"/>
</dbReference>
<dbReference type="GO" id="GO:0005524">
    <property type="term" value="F:ATP binding"/>
    <property type="evidence" value="ECO:0007669"/>
    <property type="project" value="UniProtKB-UniRule"/>
</dbReference>
<dbReference type="GO" id="GO:0000287">
    <property type="term" value="F:magnesium ion binding"/>
    <property type="evidence" value="ECO:0007669"/>
    <property type="project" value="UniProtKB-UniRule"/>
</dbReference>
<dbReference type="GO" id="GO:0004765">
    <property type="term" value="F:shikimate kinase activity"/>
    <property type="evidence" value="ECO:0007669"/>
    <property type="project" value="UniProtKB-UniRule"/>
</dbReference>
<dbReference type="GO" id="GO:0008652">
    <property type="term" value="P:amino acid biosynthetic process"/>
    <property type="evidence" value="ECO:0007669"/>
    <property type="project" value="UniProtKB-KW"/>
</dbReference>
<dbReference type="GO" id="GO:0009073">
    <property type="term" value="P:aromatic amino acid family biosynthetic process"/>
    <property type="evidence" value="ECO:0007669"/>
    <property type="project" value="UniProtKB-KW"/>
</dbReference>
<dbReference type="GO" id="GO:0009423">
    <property type="term" value="P:chorismate biosynthetic process"/>
    <property type="evidence" value="ECO:0007669"/>
    <property type="project" value="UniProtKB-UniRule"/>
</dbReference>
<dbReference type="CDD" id="cd00464">
    <property type="entry name" value="SK"/>
    <property type="match status" value="1"/>
</dbReference>
<dbReference type="Gene3D" id="3.40.50.300">
    <property type="entry name" value="P-loop containing nucleotide triphosphate hydrolases"/>
    <property type="match status" value="1"/>
</dbReference>
<dbReference type="HAMAP" id="MF_00109">
    <property type="entry name" value="Shikimate_kinase"/>
    <property type="match status" value="1"/>
</dbReference>
<dbReference type="InterPro" id="IPR027417">
    <property type="entry name" value="P-loop_NTPase"/>
</dbReference>
<dbReference type="InterPro" id="IPR031322">
    <property type="entry name" value="Shikimate/glucono_kinase"/>
</dbReference>
<dbReference type="InterPro" id="IPR000623">
    <property type="entry name" value="Shikimate_kinase/TSH1"/>
</dbReference>
<dbReference type="NCBIfam" id="NF010552">
    <property type="entry name" value="PRK13946.1"/>
    <property type="match status" value="1"/>
</dbReference>
<dbReference type="PANTHER" id="PTHR21087">
    <property type="entry name" value="SHIKIMATE KINASE"/>
    <property type="match status" value="1"/>
</dbReference>
<dbReference type="PANTHER" id="PTHR21087:SF16">
    <property type="entry name" value="SHIKIMATE KINASE 1, CHLOROPLASTIC"/>
    <property type="match status" value="1"/>
</dbReference>
<dbReference type="Pfam" id="PF01202">
    <property type="entry name" value="SKI"/>
    <property type="match status" value="1"/>
</dbReference>
<dbReference type="PRINTS" id="PR01100">
    <property type="entry name" value="SHIKIMTKNASE"/>
</dbReference>
<dbReference type="SUPFAM" id="SSF52540">
    <property type="entry name" value="P-loop containing nucleoside triphosphate hydrolases"/>
    <property type="match status" value="1"/>
</dbReference>
<comment type="function">
    <text evidence="1">Catalyzes the specific phosphorylation of the 3-hydroxyl group of shikimic acid using ATP as a cosubstrate.</text>
</comment>
<comment type="catalytic activity">
    <reaction evidence="1">
        <text>shikimate + ATP = 3-phosphoshikimate + ADP + H(+)</text>
        <dbReference type="Rhea" id="RHEA:13121"/>
        <dbReference type="ChEBI" id="CHEBI:15378"/>
        <dbReference type="ChEBI" id="CHEBI:30616"/>
        <dbReference type="ChEBI" id="CHEBI:36208"/>
        <dbReference type="ChEBI" id="CHEBI:145989"/>
        <dbReference type="ChEBI" id="CHEBI:456216"/>
        <dbReference type="EC" id="2.7.1.71"/>
    </reaction>
</comment>
<comment type="cofactor">
    <cofactor evidence="1">
        <name>Mg(2+)</name>
        <dbReference type="ChEBI" id="CHEBI:18420"/>
    </cofactor>
    <text evidence="1">Binds 1 Mg(2+) ion per subunit.</text>
</comment>
<comment type="pathway">
    <text evidence="1">Metabolic intermediate biosynthesis; chorismate biosynthesis; chorismate from D-erythrose 4-phosphate and phosphoenolpyruvate: step 5/7.</text>
</comment>
<comment type="subunit">
    <text evidence="1">Monomer.</text>
</comment>
<comment type="subcellular location">
    <subcellularLocation>
        <location evidence="1">Cytoplasm</location>
    </subcellularLocation>
</comment>
<comment type="similarity">
    <text evidence="1">Belongs to the shikimate kinase family.</text>
</comment>
<gene>
    <name evidence="1" type="primary">aroK</name>
    <name type="ordered locus">BAbS19_I19010</name>
</gene>
<name>AROK_BRUA1</name>
<sequence length="200" mass="22235">MSGTNKQTNLHRQTETIRQLLGSKVVVLVGLMGAGKSTIGRKVANMLNLPFKDADTEIETVSRMTVAELFEAYGEVEFRDLERRVILRLLDDGPMVLATGGGAYMNAETRAAIAEAGISIWINADLDVLMERVSRRQNRPLLRNSDPRGVMQRLMDERYPVYALAELHLMTRDEKKEVIAAELIEVLAAHLEKEQAASAG</sequence>
<protein>
    <recommendedName>
        <fullName evidence="1">Shikimate kinase</fullName>
        <shortName evidence="1">SK</shortName>
        <ecNumber evidence="1">2.7.1.71</ecNumber>
    </recommendedName>
</protein>
<proteinExistence type="inferred from homology"/>